<reference key="1">
    <citation type="journal article" date="2001" name="Science">
        <title>The genome of the natural genetic engineer Agrobacterium tumefaciens C58.</title>
        <authorList>
            <person name="Wood D.W."/>
            <person name="Setubal J.C."/>
            <person name="Kaul R."/>
            <person name="Monks D.E."/>
            <person name="Kitajima J.P."/>
            <person name="Okura V.K."/>
            <person name="Zhou Y."/>
            <person name="Chen L."/>
            <person name="Wood G.E."/>
            <person name="Almeida N.F. Jr."/>
            <person name="Woo L."/>
            <person name="Chen Y."/>
            <person name="Paulsen I.T."/>
            <person name="Eisen J.A."/>
            <person name="Karp P.D."/>
            <person name="Bovee D. Sr."/>
            <person name="Chapman P."/>
            <person name="Clendenning J."/>
            <person name="Deatherage G."/>
            <person name="Gillet W."/>
            <person name="Grant C."/>
            <person name="Kutyavin T."/>
            <person name="Levy R."/>
            <person name="Li M.-J."/>
            <person name="McClelland E."/>
            <person name="Palmieri A."/>
            <person name="Raymond C."/>
            <person name="Rouse G."/>
            <person name="Saenphimmachak C."/>
            <person name="Wu Z."/>
            <person name="Romero P."/>
            <person name="Gordon D."/>
            <person name="Zhang S."/>
            <person name="Yoo H."/>
            <person name="Tao Y."/>
            <person name="Biddle P."/>
            <person name="Jung M."/>
            <person name="Krespan W."/>
            <person name="Perry M."/>
            <person name="Gordon-Kamm B."/>
            <person name="Liao L."/>
            <person name="Kim S."/>
            <person name="Hendrick C."/>
            <person name="Zhao Z.-Y."/>
            <person name="Dolan M."/>
            <person name="Chumley F."/>
            <person name="Tingey S.V."/>
            <person name="Tomb J.-F."/>
            <person name="Gordon M.P."/>
            <person name="Olson M.V."/>
            <person name="Nester E.W."/>
        </authorList>
    </citation>
    <scope>NUCLEOTIDE SEQUENCE [LARGE SCALE GENOMIC DNA]</scope>
    <source>
        <strain>C58 / ATCC 33970</strain>
    </source>
</reference>
<reference key="2">
    <citation type="journal article" date="2001" name="Science">
        <title>Genome sequence of the plant pathogen and biotechnology agent Agrobacterium tumefaciens C58.</title>
        <authorList>
            <person name="Goodner B."/>
            <person name="Hinkle G."/>
            <person name="Gattung S."/>
            <person name="Miller N."/>
            <person name="Blanchard M."/>
            <person name="Qurollo B."/>
            <person name="Goldman B.S."/>
            <person name="Cao Y."/>
            <person name="Askenazi M."/>
            <person name="Halling C."/>
            <person name="Mullin L."/>
            <person name="Houmiel K."/>
            <person name="Gordon J."/>
            <person name="Vaudin M."/>
            <person name="Iartchouk O."/>
            <person name="Epp A."/>
            <person name="Liu F."/>
            <person name="Wollam C."/>
            <person name="Allinger M."/>
            <person name="Doughty D."/>
            <person name="Scott C."/>
            <person name="Lappas C."/>
            <person name="Markelz B."/>
            <person name="Flanagan C."/>
            <person name="Crowell C."/>
            <person name="Gurson J."/>
            <person name="Lomo C."/>
            <person name="Sear C."/>
            <person name="Strub G."/>
            <person name="Cielo C."/>
            <person name="Slater S."/>
        </authorList>
    </citation>
    <scope>NUCLEOTIDE SEQUENCE [LARGE SCALE GENOMIC DNA]</scope>
    <source>
        <strain>C58 / ATCC 33970</strain>
    </source>
</reference>
<protein>
    <recommendedName>
        <fullName evidence="1">Cobalt-precorrin-5B C(1)-methyltransferase</fullName>
        <ecNumber evidence="1">2.1.1.195</ecNumber>
    </recommendedName>
    <alternativeName>
        <fullName evidence="1">Cobalt-precorrin-6A synthase</fullName>
    </alternativeName>
</protein>
<accession>Q8UBQ6</accession>
<feature type="chain" id="PRO_0000141655" description="Cobalt-precorrin-5B C(1)-methyltransferase">
    <location>
        <begin position="1"/>
        <end position="376"/>
    </location>
</feature>
<feature type="region of interest" description="Disordered" evidence="2">
    <location>
        <begin position="353"/>
        <end position="376"/>
    </location>
</feature>
<feature type="compositionally biased region" description="Polar residues" evidence="2">
    <location>
        <begin position="355"/>
        <end position="366"/>
    </location>
</feature>
<dbReference type="EC" id="2.1.1.195" evidence="1"/>
<dbReference type="EMBL" id="AE007869">
    <property type="protein sequence ID" value="AAK88508.2"/>
    <property type="status" value="ALT_INIT"/>
    <property type="molecule type" value="Genomic_DNA"/>
</dbReference>
<dbReference type="PIR" id="AB2920">
    <property type="entry name" value="AB2920"/>
</dbReference>
<dbReference type="PIR" id="C97694">
    <property type="entry name" value="C97694"/>
</dbReference>
<dbReference type="RefSeq" id="NP_355723.2">
    <property type="nucleotide sequence ID" value="NC_003062.2"/>
</dbReference>
<dbReference type="RefSeq" id="WP_035258096.1">
    <property type="nucleotide sequence ID" value="NC_003062.2"/>
</dbReference>
<dbReference type="SMR" id="Q8UBQ6"/>
<dbReference type="STRING" id="176299.Atu2795"/>
<dbReference type="EnsemblBacteria" id="AAK88508">
    <property type="protein sequence ID" value="AAK88508"/>
    <property type="gene ID" value="Atu2795"/>
</dbReference>
<dbReference type="GeneID" id="1134833"/>
<dbReference type="KEGG" id="atu:Atu2795"/>
<dbReference type="PATRIC" id="fig|176299.10.peg.2805"/>
<dbReference type="eggNOG" id="COG1903">
    <property type="taxonomic scope" value="Bacteria"/>
</dbReference>
<dbReference type="HOGENOM" id="CLU_041273_0_0_5"/>
<dbReference type="OrthoDB" id="6439987at2"/>
<dbReference type="BioCyc" id="AGRO:ATU2795-MONOMER"/>
<dbReference type="UniPathway" id="UPA00148">
    <property type="reaction ID" value="UER00227"/>
</dbReference>
<dbReference type="Proteomes" id="UP000000813">
    <property type="component" value="Chromosome circular"/>
</dbReference>
<dbReference type="GO" id="GO:0043780">
    <property type="term" value="F:cobalt-precorrin-5B C1-methyltransferase activity"/>
    <property type="evidence" value="ECO:0007669"/>
    <property type="project" value="RHEA"/>
</dbReference>
<dbReference type="GO" id="GO:0019251">
    <property type="term" value="P:anaerobic cobalamin biosynthetic process"/>
    <property type="evidence" value="ECO:0007669"/>
    <property type="project" value="UniProtKB-UniRule"/>
</dbReference>
<dbReference type="GO" id="GO:0032259">
    <property type="term" value="P:methylation"/>
    <property type="evidence" value="ECO:0007669"/>
    <property type="project" value="UniProtKB-KW"/>
</dbReference>
<dbReference type="Gene3D" id="3.30.2110.10">
    <property type="entry name" value="CbiD-like"/>
    <property type="match status" value="1"/>
</dbReference>
<dbReference type="HAMAP" id="MF_00787">
    <property type="entry name" value="CbiD"/>
    <property type="match status" value="1"/>
</dbReference>
<dbReference type="InterPro" id="IPR002748">
    <property type="entry name" value="CbiD"/>
</dbReference>
<dbReference type="InterPro" id="IPR036074">
    <property type="entry name" value="CbiD_sf"/>
</dbReference>
<dbReference type="NCBIfam" id="TIGR00312">
    <property type="entry name" value="cbiD"/>
    <property type="match status" value="1"/>
</dbReference>
<dbReference type="NCBIfam" id="NF000849">
    <property type="entry name" value="PRK00075.1-1"/>
    <property type="match status" value="1"/>
</dbReference>
<dbReference type="PANTHER" id="PTHR35863">
    <property type="entry name" value="COBALT-PRECORRIN-5B C(1)-METHYLTRANSFERASE"/>
    <property type="match status" value="1"/>
</dbReference>
<dbReference type="PANTHER" id="PTHR35863:SF1">
    <property type="entry name" value="COBALT-PRECORRIN-5B C(1)-METHYLTRANSFERASE"/>
    <property type="match status" value="1"/>
</dbReference>
<dbReference type="Pfam" id="PF01888">
    <property type="entry name" value="CbiD"/>
    <property type="match status" value="1"/>
</dbReference>
<dbReference type="PIRSF" id="PIRSF026782">
    <property type="entry name" value="CbiD"/>
    <property type="match status" value="1"/>
</dbReference>
<dbReference type="SUPFAM" id="SSF111342">
    <property type="entry name" value="CbiD-like"/>
    <property type="match status" value="1"/>
</dbReference>
<sequence>METDGKTLRRGWTTGTCAAAATKAACAALLTGEFPYPVDVELPSGARPAFSLATEEKGENFARAGVVKDAGDDPDVTHGALIESTVRRGEPGSGITFRAGKGVGIITRPGLPLPPGEPAINPVPRRMIETAIREVAGENADFEVEISVRDGEKLAEKTLNGRLGILGGISILGTTGVVIPFSCSAWIHSIWRGIDVARATGCTHVLGATGNTSEKAGQAVYDLPETALIDMGDFIGGMLKYLRSHPVERVTIAGGVAKMTKLAQGMLDVHSKKGLADLEALAVLAAEAGGDDNLAVAIRQANMVAHAFQLAESVGIDLGAVVAEKAWVTAAAALKTPAIALDILVFDRQGALKGRTTSTPSHQPAPSSFGDRNRRT</sequence>
<proteinExistence type="inferred from homology"/>
<gene>
    <name evidence="1" type="primary">cbiD</name>
    <name type="ordered locus">Atu2795</name>
    <name type="ORF">AGR_C_5073</name>
</gene>
<keyword id="KW-0169">Cobalamin biosynthesis</keyword>
<keyword id="KW-0489">Methyltransferase</keyword>
<keyword id="KW-1185">Reference proteome</keyword>
<keyword id="KW-0949">S-adenosyl-L-methionine</keyword>
<keyword id="KW-0808">Transferase</keyword>
<name>CBID_AGRFC</name>
<organism>
    <name type="scientific">Agrobacterium fabrum (strain C58 / ATCC 33970)</name>
    <name type="common">Agrobacterium tumefaciens (strain C58)</name>
    <dbReference type="NCBI Taxonomy" id="176299"/>
    <lineage>
        <taxon>Bacteria</taxon>
        <taxon>Pseudomonadati</taxon>
        <taxon>Pseudomonadota</taxon>
        <taxon>Alphaproteobacteria</taxon>
        <taxon>Hyphomicrobiales</taxon>
        <taxon>Rhizobiaceae</taxon>
        <taxon>Rhizobium/Agrobacterium group</taxon>
        <taxon>Agrobacterium</taxon>
        <taxon>Agrobacterium tumefaciens complex</taxon>
    </lineage>
</organism>
<comment type="function">
    <text evidence="1">Catalyzes the methylation of C-1 in cobalt-precorrin-5B to form cobalt-precorrin-6A.</text>
</comment>
<comment type="catalytic activity">
    <reaction evidence="1">
        <text>Co-precorrin-5B + S-adenosyl-L-methionine = Co-precorrin-6A + S-adenosyl-L-homocysteine</text>
        <dbReference type="Rhea" id="RHEA:26285"/>
        <dbReference type="ChEBI" id="CHEBI:57856"/>
        <dbReference type="ChEBI" id="CHEBI:59789"/>
        <dbReference type="ChEBI" id="CHEBI:60063"/>
        <dbReference type="ChEBI" id="CHEBI:60064"/>
        <dbReference type="EC" id="2.1.1.195"/>
    </reaction>
</comment>
<comment type="pathway">
    <text evidence="1">Cofactor biosynthesis; adenosylcobalamin biosynthesis; cob(II)yrinate a,c-diamide from sirohydrochlorin (anaerobic route): step 6/10.</text>
</comment>
<comment type="similarity">
    <text evidence="1">Belongs to the CbiD family.</text>
</comment>
<comment type="sequence caution" evidence="3">
    <conflict type="erroneous initiation">
        <sequence resource="EMBL-CDS" id="AAK88508"/>
    </conflict>
</comment>
<evidence type="ECO:0000255" key="1">
    <source>
        <dbReference type="HAMAP-Rule" id="MF_00787"/>
    </source>
</evidence>
<evidence type="ECO:0000256" key="2">
    <source>
        <dbReference type="SAM" id="MobiDB-lite"/>
    </source>
</evidence>
<evidence type="ECO:0000305" key="3"/>